<feature type="chain" id="PRO_0000220676" description="StAR-related lipid transfer protein 8">
    <location>
        <begin position="1"/>
        <end position="1023"/>
    </location>
</feature>
<feature type="domain" description="Rho-GAP" evidence="2">
    <location>
        <begin position="573"/>
        <end position="777"/>
    </location>
</feature>
<feature type="domain" description="START" evidence="3">
    <location>
        <begin position="809"/>
        <end position="1017"/>
    </location>
</feature>
<feature type="region of interest" description="Disordered" evidence="4">
    <location>
        <begin position="46"/>
        <end position="67"/>
    </location>
</feature>
<feature type="region of interest" description="Disordered" evidence="4">
    <location>
        <begin position="82"/>
        <end position="161"/>
    </location>
</feature>
<feature type="region of interest" description="Disordered" evidence="4">
    <location>
        <begin position="387"/>
        <end position="461"/>
    </location>
</feature>
<feature type="region of interest" description="Disordered" evidence="4">
    <location>
        <begin position="467"/>
        <end position="486"/>
    </location>
</feature>
<feature type="region of interest" description="Disordered" evidence="4">
    <location>
        <begin position="733"/>
        <end position="757"/>
    </location>
</feature>
<feature type="compositionally biased region" description="Polar residues" evidence="4">
    <location>
        <begin position="99"/>
        <end position="114"/>
    </location>
</feature>
<feature type="compositionally biased region" description="Basic residues" evidence="4">
    <location>
        <begin position="120"/>
        <end position="130"/>
    </location>
</feature>
<feature type="compositionally biased region" description="Polar residues" evidence="4">
    <location>
        <begin position="143"/>
        <end position="161"/>
    </location>
</feature>
<feature type="compositionally biased region" description="Low complexity" evidence="4">
    <location>
        <begin position="387"/>
        <end position="397"/>
    </location>
</feature>
<feature type="compositionally biased region" description="Polar residues" evidence="4">
    <location>
        <begin position="441"/>
        <end position="459"/>
    </location>
</feature>
<feature type="site" description="Arginine finger; crucial for GTP hydrolysis by stabilizing the transition state" evidence="2">
    <location>
        <position position="608"/>
    </location>
</feature>
<feature type="modified residue" description="Phosphoserine" evidence="10">
    <location>
        <position position="108"/>
    </location>
</feature>
<feature type="modified residue" description="Asymmetric dimethylarginine" evidence="1">
    <location>
        <position position="169"/>
    </location>
</feature>
<feature type="modified residue" description="Phosphoserine" evidence="10">
    <location>
        <position position="235"/>
    </location>
</feature>
<feature type="modified residue" description="Phosphoserine" evidence="1">
    <location>
        <position position="238"/>
    </location>
</feature>
<feature type="modified residue" description="Phosphoserine" evidence="1">
    <location>
        <position position="498"/>
    </location>
</feature>
<feature type="modified residue" description="Phosphoserine" evidence="1">
    <location>
        <position position="506"/>
    </location>
</feature>
<feature type="splice variant" id="VSP_032984" description="In isoform 2." evidence="8">
    <original>M</original>
    <variation>MPLLDVFWSCFRKVKCFPLLQVKKNAEAEAKRACEWLQATGFPQYVQLFEEGSFPLDIGSVKKNHGFLDEDSLGALCRRLM</variation>
    <location>
        <position position="1"/>
    </location>
</feature>
<feature type="sequence variant" id="VAR_036588" description="In a breast cancer sample; somatic mutation; dbSNP:rs139380533." evidence="5">
    <original>G</original>
    <variation>S</variation>
    <location>
        <position position="188"/>
    </location>
</feature>
<feature type="sequence variant" id="VAR_036589" description="In a breast cancer sample; somatic mutation." evidence="5">
    <original>E</original>
    <variation>K</variation>
    <location>
        <position position="242"/>
    </location>
</feature>
<feature type="sequence variant" id="VAR_061816" description="In dbSNP:rs55962426.">
    <original>R</original>
    <variation>Q</variation>
    <location>
        <position position="327"/>
    </location>
</feature>
<feature type="mutagenesis site" description="No effect on cell morphology when overexpressed." evidence="7">
    <original>R</original>
    <variation>E</variation>
    <location>
        <position position="608"/>
    </location>
</feature>
<feature type="sequence conflict" description="In Ref. 1; BAA11506." evidence="9" ref="1">
    <original>P</original>
    <variation>S</variation>
    <location>
        <position position="466"/>
    </location>
</feature>
<feature type="sequence conflict" description="In Ref. 3; CAH18253." evidence="9" ref="3">
    <original>D</original>
    <variation>G</variation>
    <location sequence="Q92502-2">
        <position position="71"/>
    </location>
</feature>
<proteinExistence type="evidence at protein level"/>
<gene>
    <name type="primary">STARD8</name>
    <name type="synonym">DLC3</name>
    <name type="synonym">KIAA0189</name>
</gene>
<reference key="1">
    <citation type="journal article" date="1996" name="DNA Res.">
        <title>Prediction of the coding sequences of unidentified human genes. V. The coding sequences of 40 new genes (KIAA0161-KIAA0200) deduced by analysis of cDNA clones from human cell line KG-1.</title>
        <authorList>
            <person name="Nagase T."/>
            <person name="Seki N."/>
            <person name="Ishikawa K."/>
            <person name="Tanaka A."/>
            <person name="Nomura N."/>
        </authorList>
    </citation>
    <scope>NUCLEOTIDE SEQUENCE [LARGE SCALE MRNA] (ISOFORM 1)</scope>
    <source>
        <tissue>Bone marrow</tissue>
    </source>
</reference>
<reference key="2">
    <citation type="journal article" date="2004" name="Nat. Genet.">
        <title>Complete sequencing and characterization of 21,243 full-length human cDNAs.</title>
        <authorList>
            <person name="Ota T."/>
            <person name="Suzuki Y."/>
            <person name="Nishikawa T."/>
            <person name="Otsuki T."/>
            <person name="Sugiyama T."/>
            <person name="Irie R."/>
            <person name="Wakamatsu A."/>
            <person name="Hayashi K."/>
            <person name="Sato H."/>
            <person name="Nagai K."/>
            <person name="Kimura K."/>
            <person name="Makita H."/>
            <person name="Sekine M."/>
            <person name="Obayashi M."/>
            <person name="Nishi T."/>
            <person name="Shibahara T."/>
            <person name="Tanaka T."/>
            <person name="Ishii S."/>
            <person name="Yamamoto J."/>
            <person name="Saito K."/>
            <person name="Kawai Y."/>
            <person name="Isono Y."/>
            <person name="Nakamura Y."/>
            <person name="Nagahari K."/>
            <person name="Murakami K."/>
            <person name="Yasuda T."/>
            <person name="Iwayanagi T."/>
            <person name="Wagatsuma M."/>
            <person name="Shiratori A."/>
            <person name="Sudo H."/>
            <person name="Hosoiri T."/>
            <person name="Kaku Y."/>
            <person name="Kodaira H."/>
            <person name="Kondo H."/>
            <person name="Sugawara M."/>
            <person name="Takahashi M."/>
            <person name="Kanda K."/>
            <person name="Yokoi T."/>
            <person name="Furuya T."/>
            <person name="Kikkawa E."/>
            <person name="Omura Y."/>
            <person name="Abe K."/>
            <person name="Kamihara K."/>
            <person name="Katsuta N."/>
            <person name="Sato K."/>
            <person name="Tanikawa M."/>
            <person name="Yamazaki M."/>
            <person name="Ninomiya K."/>
            <person name="Ishibashi T."/>
            <person name="Yamashita H."/>
            <person name="Murakawa K."/>
            <person name="Fujimori K."/>
            <person name="Tanai H."/>
            <person name="Kimata M."/>
            <person name="Watanabe M."/>
            <person name="Hiraoka S."/>
            <person name="Chiba Y."/>
            <person name="Ishida S."/>
            <person name="Ono Y."/>
            <person name="Takiguchi S."/>
            <person name="Watanabe S."/>
            <person name="Yosida M."/>
            <person name="Hotuta T."/>
            <person name="Kusano J."/>
            <person name="Kanehori K."/>
            <person name="Takahashi-Fujii A."/>
            <person name="Hara H."/>
            <person name="Tanase T.-O."/>
            <person name="Nomura Y."/>
            <person name="Togiya S."/>
            <person name="Komai F."/>
            <person name="Hara R."/>
            <person name="Takeuchi K."/>
            <person name="Arita M."/>
            <person name="Imose N."/>
            <person name="Musashino K."/>
            <person name="Yuuki H."/>
            <person name="Oshima A."/>
            <person name="Sasaki N."/>
            <person name="Aotsuka S."/>
            <person name="Yoshikawa Y."/>
            <person name="Matsunawa H."/>
            <person name="Ichihara T."/>
            <person name="Shiohata N."/>
            <person name="Sano S."/>
            <person name="Moriya S."/>
            <person name="Momiyama H."/>
            <person name="Satoh N."/>
            <person name="Takami S."/>
            <person name="Terashima Y."/>
            <person name="Suzuki O."/>
            <person name="Nakagawa S."/>
            <person name="Senoh A."/>
            <person name="Mizoguchi H."/>
            <person name="Goto Y."/>
            <person name="Shimizu F."/>
            <person name="Wakebe H."/>
            <person name="Hishigaki H."/>
            <person name="Watanabe T."/>
            <person name="Sugiyama A."/>
            <person name="Takemoto M."/>
            <person name="Kawakami B."/>
            <person name="Yamazaki M."/>
            <person name="Watanabe K."/>
            <person name="Kumagai A."/>
            <person name="Itakura S."/>
            <person name="Fukuzumi Y."/>
            <person name="Fujimori Y."/>
            <person name="Komiyama M."/>
            <person name="Tashiro H."/>
            <person name="Tanigami A."/>
            <person name="Fujiwara T."/>
            <person name="Ono T."/>
            <person name="Yamada K."/>
            <person name="Fujii Y."/>
            <person name="Ozaki K."/>
            <person name="Hirao M."/>
            <person name="Ohmori Y."/>
            <person name="Kawabata A."/>
            <person name="Hikiji T."/>
            <person name="Kobatake N."/>
            <person name="Inagaki H."/>
            <person name="Ikema Y."/>
            <person name="Okamoto S."/>
            <person name="Okitani R."/>
            <person name="Kawakami T."/>
            <person name="Noguchi S."/>
            <person name="Itoh T."/>
            <person name="Shigeta K."/>
            <person name="Senba T."/>
            <person name="Matsumura K."/>
            <person name="Nakajima Y."/>
            <person name="Mizuno T."/>
            <person name="Morinaga M."/>
            <person name="Sasaki M."/>
            <person name="Togashi T."/>
            <person name="Oyama M."/>
            <person name="Hata H."/>
            <person name="Watanabe M."/>
            <person name="Komatsu T."/>
            <person name="Mizushima-Sugano J."/>
            <person name="Satoh T."/>
            <person name="Shirai Y."/>
            <person name="Takahashi Y."/>
            <person name="Nakagawa K."/>
            <person name="Okumura K."/>
            <person name="Nagase T."/>
            <person name="Nomura N."/>
            <person name="Kikuchi H."/>
            <person name="Masuho Y."/>
            <person name="Yamashita R."/>
            <person name="Nakai K."/>
            <person name="Yada T."/>
            <person name="Nakamura Y."/>
            <person name="Ohara O."/>
            <person name="Isogai T."/>
            <person name="Sugano S."/>
        </authorList>
    </citation>
    <scope>NUCLEOTIDE SEQUENCE [LARGE SCALE MRNA] (ISOFORM 1)</scope>
    <source>
        <tissue>Placenta</tissue>
    </source>
</reference>
<reference key="3">
    <citation type="journal article" date="2007" name="BMC Genomics">
        <title>The full-ORF clone resource of the German cDNA consortium.</title>
        <authorList>
            <person name="Bechtel S."/>
            <person name="Rosenfelder H."/>
            <person name="Duda A."/>
            <person name="Schmidt C.P."/>
            <person name="Ernst U."/>
            <person name="Wellenreuther R."/>
            <person name="Mehrle A."/>
            <person name="Schuster C."/>
            <person name="Bahr A."/>
            <person name="Bloecker H."/>
            <person name="Heubner D."/>
            <person name="Hoerlein A."/>
            <person name="Michel G."/>
            <person name="Wedler H."/>
            <person name="Koehrer K."/>
            <person name="Ottenwaelder B."/>
            <person name="Poustka A."/>
            <person name="Wiemann S."/>
            <person name="Schupp I."/>
        </authorList>
    </citation>
    <scope>NUCLEOTIDE SEQUENCE [LARGE SCALE MRNA] (ISOFORM 2)</scope>
    <source>
        <tissue>Endometrial tumor</tissue>
    </source>
</reference>
<reference key="4">
    <citation type="journal article" date="2005" name="Nature">
        <title>The DNA sequence of the human X chromosome.</title>
        <authorList>
            <person name="Ross M.T."/>
            <person name="Grafham D.V."/>
            <person name="Coffey A.J."/>
            <person name="Scherer S."/>
            <person name="McLay K."/>
            <person name="Muzny D."/>
            <person name="Platzer M."/>
            <person name="Howell G.R."/>
            <person name="Burrows C."/>
            <person name="Bird C.P."/>
            <person name="Frankish A."/>
            <person name="Lovell F.L."/>
            <person name="Howe K.L."/>
            <person name="Ashurst J.L."/>
            <person name="Fulton R.S."/>
            <person name="Sudbrak R."/>
            <person name="Wen G."/>
            <person name="Jones M.C."/>
            <person name="Hurles M.E."/>
            <person name="Andrews T.D."/>
            <person name="Scott C.E."/>
            <person name="Searle S."/>
            <person name="Ramser J."/>
            <person name="Whittaker A."/>
            <person name="Deadman R."/>
            <person name="Carter N.P."/>
            <person name="Hunt S.E."/>
            <person name="Chen R."/>
            <person name="Cree A."/>
            <person name="Gunaratne P."/>
            <person name="Havlak P."/>
            <person name="Hodgson A."/>
            <person name="Metzker M.L."/>
            <person name="Richards S."/>
            <person name="Scott G."/>
            <person name="Steffen D."/>
            <person name="Sodergren E."/>
            <person name="Wheeler D.A."/>
            <person name="Worley K.C."/>
            <person name="Ainscough R."/>
            <person name="Ambrose K.D."/>
            <person name="Ansari-Lari M.A."/>
            <person name="Aradhya S."/>
            <person name="Ashwell R.I."/>
            <person name="Babbage A.K."/>
            <person name="Bagguley C.L."/>
            <person name="Ballabio A."/>
            <person name="Banerjee R."/>
            <person name="Barker G.E."/>
            <person name="Barlow K.F."/>
            <person name="Barrett I.P."/>
            <person name="Bates K.N."/>
            <person name="Beare D.M."/>
            <person name="Beasley H."/>
            <person name="Beasley O."/>
            <person name="Beck A."/>
            <person name="Bethel G."/>
            <person name="Blechschmidt K."/>
            <person name="Brady N."/>
            <person name="Bray-Allen S."/>
            <person name="Bridgeman A.M."/>
            <person name="Brown A.J."/>
            <person name="Brown M.J."/>
            <person name="Bonnin D."/>
            <person name="Bruford E.A."/>
            <person name="Buhay C."/>
            <person name="Burch P."/>
            <person name="Burford D."/>
            <person name="Burgess J."/>
            <person name="Burrill W."/>
            <person name="Burton J."/>
            <person name="Bye J.M."/>
            <person name="Carder C."/>
            <person name="Carrel L."/>
            <person name="Chako J."/>
            <person name="Chapman J.C."/>
            <person name="Chavez D."/>
            <person name="Chen E."/>
            <person name="Chen G."/>
            <person name="Chen Y."/>
            <person name="Chen Z."/>
            <person name="Chinault C."/>
            <person name="Ciccodicola A."/>
            <person name="Clark S.Y."/>
            <person name="Clarke G."/>
            <person name="Clee C.M."/>
            <person name="Clegg S."/>
            <person name="Clerc-Blankenburg K."/>
            <person name="Clifford K."/>
            <person name="Cobley V."/>
            <person name="Cole C.G."/>
            <person name="Conquer J.S."/>
            <person name="Corby N."/>
            <person name="Connor R.E."/>
            <person name="David R."/>
            <person name="Davies J."/>
            <person name="Davis C."/>
            <person name="Davis J."/>
            <person name="Delgado O."/>
            <person name="Deshazo D."/>
            <person name="Dhami P."/>
            <person name="Ding Y."/>
            <person name="Dinh H."/>
            <person name="Dodsworth S."/>
            <person name="Draper H."/>
            <person name="Dugan-Rocha S."/>
            <person name="Dunham A."/>
            <person name="Dunn M."/>
            <person name="Durbin K.J."/>
            <person name="Dutta I."/>
            <person name="Eades T."/>
            <person name="Ellwood M."/>
            <person name="Emery-Cohen A."/>
            <person name="Errington H."/>
            <person name="Evans K.L."/>
            <person name="Faulkner L."/>
            <person name="Francis F."/>
            <person name="Frankland J."/>
            <person name="Fraser A.E."/>
            <person name="Galgoczy P."/>
            <person name="Gilbert J."/>
            <person name="Gill R."/>
            <person name="Gloeckner G."/>
            <person name="Gregory S.G."/>
            <person name="Gribble S."/>
            <person name="Griffiths C."/>
            <person name="Grocock R."/>
            <person name="Gu Y."/>
            <person name="Gwilliam R."/>
            <person name="Hamilton C."/>
            <person name="Hart E.A."/>
            <person name="Hawes A."/>
            <person name="Heath P.D."/>
            <person name="Heitmann K."/>
            <person name="Hennig S."/>
            <person name="Hernandez J."/>
            <person name="Hinzmann B."/>
            <person name="Ho S."/>
            <person name="Hoffs M."/>
            <person name="Howden P.J."/>
            <person name="Huckle E.J."/>
            <person name="Hume J."/>
            <person name="Hunt P.J."/>
            <person name="Hunt A.R."/>
            <person name="Isherwood J."/>
            <person name="Jacob L."/>
            <person name="Johnson D."/>
            <person name="Jones S."/>
            <person name="de Jong P.J."/>
            <person name="Joseph S.S."/>
            <person name="Keenan S."/>
            <person name="Kelly S."/>
            <person name="Kershaw J.K."/>
            <person name="Khan Z."/>
            <person name="Kioschis P."/>
            <person name="Klages S."/>
            <person name="Knights A.J."/>
            <person name="Kosiura A."/>
            <person name="Kovar-Smith C."/>
            <person name="Laird G.K."/>
            <person name="Langford C."/>
            <person name="Lawlor S."/>
            <person name="Leversha M."/>
            <person name="Lewis L."/>
            <person name="Liu W."/>
            <person name="Lloyd C."/>
            <person name="Lloyd D.M."/>
            <person name="Loulseged H."/>
            <person name="Loveland J.E."/>
            <person name="Lovell J.D."/>
            <person name="Lozado R."/>
            <person name="Lu J."/>
            <person name="Lyne R."/>
            <person name="Ma J."/>
            <person name="Maheshwari M."/>
            <person name="Matthews L.H."/>
            <person name="McDowall J."/>
            <person name="McLaren S."/>
            <person name="McMurray A."/>
            <person name="Meidl P."/>
            <person name="Meitinger T."/>
            <person name="Milne S."/>
            <person name="Miner G."/>
            <person name="Mistry S.L."/>
            <person name="Morgan M."/>
            <person name="Morris S."/>
            <person name="Mueller I."/>
            <person name="Mullikin J.C."/>
            <person name="Nguyen N."/>
            <person name="Nordsiek G."/>
            <person name="Nyakatura G."/>
            <person name="O'dell C.N."/>
            <person name="Okwuonu G."/>
            <person name="Palmer S."/>
            <person name="Pandian R."/>
            <person name="Parker D."/>
            <person name="Parrish J."/>
            <person name="Pasternak S."/>
            <person name="Patel D."/>
            <person name="Pearce A.V."/>
            <person name="Pearson D.M."/>
            <person name="Pelan S.E."/>
            <person name="Perez L."/>
            <person name="Porter K.M."/>
            <person name="Ramsey Y."/>
            <person name="Reichwald K."/>
            <person name="Rhodes S."/>
            <person name="Ridler K.A."/>
            <person name="Schlessinger D."/>
            <person name="Schueler M.G."/>
            <person name="Sehra H.K."/>
            <person name="Shaw-Smith C."/>
            <person name="Shen H."/>
            <person name="Sheridan E.M."/>
            <person name="Shownkeen R."/>
            <person name="Skuce C.D."/>
            <person name="Smith M.L."/>
            <person name="Sotheran E.C."/>
            <person name="Steingruber H.E."/>
            <person name="Steward C.A."/>
            <person name="Storey R."/>
            <person name="Swann R.M."/>
            <person name="Swarbreck D."/>
            <person name="Tabor P.E."/>
            <person name="Taudien S."/>
            <person name="Taylor T."/>
            <person name="Teague B."/>
            <person name="Thomas K."/>
            <person name="Thorpe A."/>
            <person name="Timms K."/>
            <person name="Tracey A."/>
            <person name="Trevanion S."/>
            <person name="Tromans A.C."/>
            <person name="d'Urso M."/>
            <person name="Verduzco D."/>
            <person name="Villasana D."/>
            <person name="Waldron L."/>
            <person name="Wall M."/>
            <person name="Wang Q."/>
            <person name="Warren J."/>
            <person name="Warry G.L."/>
            <person name="Wei X."/>
            <person name="West A."/>
            <person name="Whitehead S.L."/>
            <person name="Whiteley M.N."/>
            <person name="Wilkinson J.E."/>
            <person name="Willey D.L."/>
            <person name="Williams G."/>
            <person name="Williams L."/>
            <person name="Williamson A."/>
            <person name="Williamson H."/>
            <person name="Wilming L."/>
            <person name="Woodmansey R.L."/>
            <person name="Wray P.W."/>
            <person name="Yen J."/>
            <person name="Zhang J."/>
            <person name="Zhou J."/>
            <person name="Zoghbi H."/>
            <person name="Zorilla S."/>
            <person name="Buck D."/>
            <person name="Reinhardt R."/>
            <person name="Poustka A."/>
            <person name="Rosenthal A."/>
            <person name="Lehrach H."/>
            <person name="Meindl A."/>
            <person name="Minx P.J."/>
            <person name="Hillier L.W."/>
            <person name="Willard H.F."/>
            <person name="Wilson R.K."/>
            <person name="Waterston R.H."/>
            <person name="Rice C.M."/>
            <person name="Vaudin M."/>
            <person name="Coulson A."/>
            <person name="Nelson D.L."/>
            <person name="Weinstock G."/>
            <person name="Sulston J.E."/>
            <person name="Durbin R.M."/>
            <person name="Hubbard T."/>
            <person name="Gibbs R.A."/>
            <person name="Beck S."/>
            <person name="Rogers J."/>
            <person name="Bentley D.R."/>
        </authorList>
    </citation>
    <scope>NUCLEOTIDE SEQUENCE [LARGE SCALE GENOMIC DNA]</scope>
</reference>
<reference key="5">
    <citation type="submission" date="2005-09" db="EMBL/GenBank/DDBJ databases">
        <authorList>
            <person name="Mural R.J."/>
            <person name="Istrail S."/>
            <person name="Sutton G.G."/>
            <person name="Florea L."/>
            <person name="Halpern A.L."/>
            <person name="Mobarry C.M."/>
            <person name="Lippert R."/>
            <person name="Walenz B."/>
            <person name="Shatkay H."/>
            <person name="Dew I."/>
            <person name="Miller J.R."/>
            <person name="Flanigan M.J."/>
            <person name="Edwards N.J."/>
            <person name="Bolanos R."/>
            <person name="Fasulo D."/>
            <person name="Halldorsson B.V."/>
            <person name="Hannenhalli S."/>
            <person name="Turner R."/>
            <person name="Yooseph S."/>
            <person name="Lu F."/>
            <person name="Nusskern D.R."/>
            <person name="Shue B.C."/>
            <person name="Zheng X.H."/>
            <person name="Zhong F."/>
            <person name="Delcher A.L."/>
            <person name="Huson D.H."/>
            <person name="Kravitz S.A."/>
            <person name="Mouchard L."/>
            <person name="Reinert K."/>
            <person name="Remington K.A."/>
            <person name="Clark A.G."/>
            <person name="Waterman M.S."/>
            <person name="Eichler E.E."/>
            <person name="Adams M.D."/>
            <person name="Hunkapiller M.W."/>
            <person name="Myers E.W."/>
            <person name="Venter J.C."/>
        </authorList>
    </citation>
    <scope>NUCLEOTIDE SEQUENCE [LARGE SCALE GENOMIC DNA]</scope>
</reference>
<reference key="6">
    <citation type="journal article" date="2004" name="Genome Res.">
        <title>The status, quality, and expansion of the NIH full-length cDNA project: the Mammalian Gene Collection (MGC).</title>
        <authorList>
            <consortium name="The MGC Project Team"/>
        </authorList>
    </citation>
    <scope>NUCLEOTIDE SEQUENCE [LARGE SCALE MRNA] (ISOFORM 1)</scope>
    <source>
        <tissue>Uterus</tissue>
    </source>
</reference>
<reference key="7">
    <citation type="journal article" date="2007" name="Biochem. Biophys. Res. Commun.">
        <title>START-GAP3/DLC3 is a GAP for RhoA and Cdc42 and is localized in focal adhesions regulating cell morphology.</title>
        <authorList>
            <person name="Kawai K."/>
            <person name="Kiyota M."/>
            <person name="Seike J."/>
            <person name="Deki Y."/>
            <person name="Yagisawa H."/>
        </authorList>
    </citation>
    <scope>FUNCTION</scope>
    <scope>SUBCELLULAR LOCATION</scope>
    <scope>MUTAGENESIS OF ARG-608</scope>
</reference>
<reference key="8">
    <citation type="journal article" date="2007" name="Oncogene">
        <title>Deleted in liver cancer 3 (DLC-3), a novel Rho GTPase-activating protein, is downregulated in cancer and inhibits tumor cell growth.</title>
        <authorList>
            <person name="Durkin M.E."/>
            <person name="Ullmannova V."/>
            <person name="Guan M."/>
            <person name="Popescu N.C."/>
        </authorList>
    </citation>
    <scope>TISSUE SPECIFICITY</scope>
</reference>
<reference key="9">
    <citation type="journal article" date="2007" name="Proc. Natl. Acad. Sci. U.S.A.">
        <title>Oncogenic inhibition by a deleted in liver cancer gene requires cooperation between tensin binding and Rho-specific GTPase-activating protein activities.</title>
        <authorList>
            <person name="Qian X."/>
            <person name="Li G."/>
            <person name="Asmussen H.K."/>
            <person name="Asnaghi L."/>
            <person name="Vass W.C."/>
            <person name="Braverman R."/>
            <person name="Yamada K.M."/>
            <person name="Popescu N.C."/>
            <person name="Papageorge A.G."/>
            <person name="Lowy D.R."/>
        </authorList>
    </citation>
    <scope>INTERACTION WITH TNS1</scope>
</reference>
<reference key="10">
    <citation type="journal article" date="2013" name="J. Proteome Res.">
        <title>Toward a comprehensive characterization of a human cancer cell phosphoproteome.</title>
        <authorList>
            <person name="Zhou H."/>
            <person name="Di Palma S."/>
            <person name="Preisinger C."/>
            <person name="Peng M."/>
            <person name="Polat A.N."/>
            <person name="Heck A.J."/>
            <person name="Mohammed S."/>
        </authorList>
    </citation>
    <scope>PHOSPHORYLATION [LARGE SCALE ANALYSIS] AT SER-108 AND SER-235</scope>
    <scope>IDENTIFICATION BY MASS SPECTROMETRY [LARGE SCALE ANALYSIS]</scope>
    <source>
        <tissue>Erythroleukemia</tissue>
    </source>
</reference>
<reference key="11">
    <citation type="journal article" date="2006" name="Science">
        <title>The consensus coding sequences of human breast and colorectal cancers.</title>
        <authorList>
            <person name="Sjoeblom T."/>
            <person name="Jones S."/>
            <person name="Wood L.D."/>
            <person name="Parsons D.W."/>
            <person name="Lin J."/>
            <person name="Barber T.D."/>
            <person name="Mandelker D."/>
            <person name="Leary R.J."/>
            <person name="Ptak J."/>
            <person name="Silliman N."/>
            <person name="Szabo S."/>
            <person name="Buckhaults P."/>
            <person name="Farrell C."/>
            <person name="Meeh P."/>
            <person name="Markowitz S.D."/>
            <person name="Willis J."/>
            <person name="Dawson D."/>
            <person name="Willson J.K.V."/>
            <person name="Gazdar A.F."/>
            <person name="Hartigan J."/>
            <person name="Wu L."/>
            <person name="Liu C."/>
            <person name="Parmigiani G."/>
            <person name="Park B.H."/>
            <person name="Bachman K.E."/>
            <person name="Papadopoulos N."/>
            <person name="Vogelstein B."/>
            <person name="Kinzler K.W."/>
            <person name="Velculescu V.E."/>
        </authorList>
    </citation>
    <scope>VARIANTS [LARGE SCALE ANALYSIS] SER-188 AND LYS-242</scope>
</reference>
<organism>
    <name type="scientific">Homo sapiens</name>
    <name type="common">Human</name>
    <dbReference type="NCBI Taxonomy" id="9606"/>
    <lineage>
        <taxon>Eukaryota</taxon>
        <taxon>Metazoa</taxon>
        <taxon>Chordata</taxon>
        <taxon>Craniata</taxon>
        <taxon>Vertebrata</taxon>
        <taxon>Euteleostomi</taxon>
        <taxon>Mammalia</taxon>
        <taxon>Eutheria</taxon>
        <taxon>Euarchontoglires</taxon>
        <taxon>Primates</taxon>
        <taxon>Haplorrhini</taxon>
        <taxon>Catarrhini</taxon>
        <taxon>Hominidae</taxon>
        <taxon>Homo</taxon>
    </lineage>
</organism>
<keyword id="KW-0025">Alternative splicing</keyword>
<keyword id="KW-0965">Cell junction</keyword>
<keyword id="KW-0343">GTPase activation</keyword>
<keyword id="KW-0488">Methylation</keyword>
<keyword id="KW-0597">Phosphoprotein</keyword>
<keyword id="KW-1267">Proteomics identification</keyword>
<keyword id="KW-1185">Reference proteome</keyword>
<comment type="function">
    <text evidence="7">Accelerates GTPase activity of RHOA and CDC42, but not RAC1. Stimulates the hydrolysis of phosphatidylinositol 4,5-bisphosphate by PLCD1.</text>
</comment>
<comment type="subunit">
    <text>Binds both the SH2 and PTB domains of TNS1.</text>
</comment>
<comment type="subcellular location">
    <subcellularLocation>
        <location evidence="7">Cell junction</location>
        <location evidence="7">Focal adhesion</location>
    </subcellularLocation>
</comment>
<comment type="alternative products">
    <event type="alternative splicing"/>
    <isoform>
        <id>Q92502-1</id>
        <name>1</name>
        <name>DLC3beta</name>
        <sequence type="displayed"/>
    </isoform>
    <isoform>
        <id>Q92502-2</id>
        <name>2</name>
        <name>DLC3alpha</name>
        <sequence type="described" ref="VSP_032984"/>
    </isoform>
</comment>
<comment type="tissue specificity">
    <text evidence="6">Widely expressed with highest levels in kidney, lung and placenta.</text>
</comment>
<comment type="sequence caution" evidence="9">
    <conflict type="erroneous initiation">
        <sequence resource="EMBL-CDS" id="BAA11506"/>
    </conflict>
</comment>
<name>STAR8_HUMAN</name>
<evidence type="ECO:0000250" key="1">
    <source>
        <dbReference type="UniProtKB" id="Q8K031"/>
    </source>
</evidence>
<evidence type="ECO:0000255" key="2">
    <source>
        <dbReference type="PROSITE-ProRule" id="PRU00172"/>
    </source>
</evidence>
<evidence type="ECO:0000255" key="3">
    <source>
        <dbReference type="PROSITE-ProRule" id="PRU00197"/>
    </source>
</evidence>
<evidence type="ECO:0000256" key="4">
    <source>
        <dbReference type="SAM" id="MobiDB-lite"/>
    </source>
</evidence>
<evidence type="ECO:0000269" key="5">
    <source>
    </source>
</evidence>
<evidence type="ECO:0000269" key="6">
    <source>
    </source>
</evidence>
<evidence type="ECO:0000269" key="7">
    <source>
    </source>
</evidence>
<evidence type="ECO:0000303" key="8">
    <source>
    </source>
</evidence>
<evidence type="ECO:0000305" key="9"/>
<evidence type="ECO:0007744" key="10">
    <source>
    </source>
</evidence>
<protein>
    <recommendedName>
        <fullName>StAR-related lipid transfer protein 8</fullName>
    </recommendedName>
    <alternativeName>
        <fullName>Deleted in liver cancer 3 protein</fullName>
        <shortName>DLC-3</shortName>
    </alternativeName>
    <alternativeName>
        <fullName>START domain-containing protein 8</fullName>
        <shortName>StARD8</shortName>
    </alternativeName>
    <alternativeName>
        <fullName>START-GAP3</fullName>
    </alternativeName>
</protein>
<sequence>MTLNNCASMKLEVHFQSKQNEDSEEEEQCTISSHWAFQQESKCWSPMGSSDLLAPPSPGLPATSSCESVLTELSATSLPVITVSLPPEPADLPLPGRAPSSSDRPLLSPTQGQEGPQDKAKKRHRNRSFLKHLESLRRKEKSGSQQAEPKHSPATSEKVSKASSFRSCRGFLSAGFYRAKNWAATSAGGSGANTRKAWEAWPVASFRHPQWTHRGDCLVHVPGDHKPGTFPRSLSIESLCPEDGHRLADWQPGRRWGCEGRRGSCGSTGSHASTYDNLPELYPAEPVMVGAEAEDEDDEESGGSYAHLDDILQHVWGLQQRVELWSRAMYPDLGPGDEEEEEATSSVEIATVEVKCQAEALSQMEVPAHGESPAWAQAEVQPAVLAPAQAPAEAEPVAQEEAEAPAPAPAPAPAQDSEQEAHSGGEPTFASSLSVEEGHSISDTVASSSELDSSGNSMNEAEAAGPLAGLQASMPRERRDSGVGASLTRPCRKLRWHSFQNSHRPSLNSESLEINRQFAGQINLLHKGSLLRLTAFMEKYTVPHKQGWVWSMPKFMRRNKTPDYRGQHVFGVPPLIHVQRTGQPLPQSIQQAMRYLRSQCLDQVGIFRKSGVKSRIQNLRQMNETSPDNVCYEGQSAYDVADLLKQYFRDLPEPIFTSKLTTTFLQIYQLLPKDQWLAAAQAATLLLPDENREVLQTLLYFLSDIASAEENQMTAGNLAVCLAPSIFHLNVSKKDSPSPRIKSKRSLIGRPGPRDLSDNMAATQGLSHMISDCKKLFQVPQDMVLQLCSSYSAAELSPPGPALAELRQAQAAGVSLSLYMEENIQDLLRDAAERFKGWMSVPGPQHTELACRKAPDGHPLRLWKASTEVAAPPAVVLHRVLRERALWDEDLLRAQVLEALMPGVELYHYVTDSMAPHPCRDFVVLRMWRSDLPRGGCLLVSQSLDPEQPVPESGVRALMLTSQYLMEPCGLGRSRLTHICRADLRGRSPDWYNKVFGHLCAMEVAKIRDSFPTLQAAGPETKL</sequence>
<dbReference type="EMBL" id="D80011">
    <property type="protein sequence ID" value="BAA11506.2"/>
    <property type="status" value="ALT_INIT"/>
    <property type="molecule type" value="mRNA"/>
</dbReference>
<dbReference type="EMBL" id="AK291747">
    <property type="protein sequence ID" value="BAF84436.1"/>
    <property type="molecule type" value="mRNA"/>
</dbReference>
<dbReference type="EMBL" id="CR749411">
    <property type="protein sequence ID" value="CAH18253.1"/>
    <property type="molecule type" value="mRNA"/>
</dbReference>
<dbReference type="EMBL" id="AL360076">
    <property type="status" value="NOT_ANNOTATED_CDS"/>
    <property type="molecule type" value="Genomic_DNA"/>
</dbReference>
<dbReference type="EMBL" id="CH471132">
    <property type="protein sequence ID" value="EAX05374.1"/>
    <property type="molecule type" value="Genomic_DNA"/>
</dbReference>
<dbReference type="EMBL" id="CH471132">
    <property type="protein sequence ID" value="EAX05375.1"/>
    <property type="molecule type" value="Genomic_DNA"/>
</dbReference>
<dbReference type="EMBL" id="BC035587">
    <property type="protein sequence ID" value="AAH35587.1"/>
    <property type="molecule type" value="mRNA"/>
</dbReference>
<dbReference type="CCDS" id="CCDS14390.1">
    <molecule id="Q92502-1"/>
</dbReference>
<dbReference type="CCDS" id="CCDS48134.1">
    <molecule id="Q92502-2"/>
</dbReference>
<dbReference type="PIR" id="B59430">
    <property type="entry name" value="B59430"/>
</dbReference>
<dbReference type="RefSeq" id="NP_001135975.1">
    <molecule id="Q92502-2"/>
    <property type="nucleotide sequence ID" value="NM_001142503.3"/>
</dbReference>
<dbReference type="RefSeq" id="NP_001135976.1">
    <molecule id="Q92502-1"/>
    <property type="nucleotide sequence ID" value="NM_001142504.3"/>
</dbReference>
<dbReference type="RefSeq" id="NP_055540.2">
    <molecule id="Q92502-1"/>
    <property type="nucleotide sequence ID" value="NM_014725.4"/>
</dbReference>
<dbReference type="RefSeq" id="XP_011529371.1">
    <property type="nucleotide sequence ID" value="XM_011531069.2"/>
</dbReference>
<dbReference type="SMR" id="Q92502"/>
<dbReference type="BioGRID" id="115102">
    <property type="interactions" value="20"/>
</dbReference>
<dbReference type="DIP" id="DIP-60949N"/>
<dbReference type="FunCoup" id="Q92502">
    <property type="interactions" value="50"/>
</dbReference>
<dbReference type="IntAct" id="Q92502">
    <property type="interactions" value="9"/>
</dbReference>
<dbReference type="MINT" id="Q92502"/>
<dbReference type="STRING" id="9606.ENSP00000363727"/>
<dbReference type="iPTMnet" id="Q92502"/>
<dbReference type="PhosphoSitePlus" id="Q92502"/>
<dbReference type="BioMuta" id="STARD8"/>
<dbReference type="DMDM" id="90110072"/>
<dbReference type="jPOST" id="Q92502"/>
<dbReference type="MassIVE" id="Q92502"/>
<dbReference type="PaxDb" id="9606-ENSP00000363727"/>
<dbReference type="PeptideAtlas" id="Q92502"/>
<dbReference type="ProteomicsDB" id="75270">
    <molecule id="Q92502-1"/>
</dbReference>
<dbReference type="ProteomicsDB" id="75271">
    <molecule id="Q92502-2"/>
</dbReference>
<dbReference type="Antibodypedia" id="27311">
    <property type="antibodies" value="126 antibodies from 20 providers"/>
</dbReference>
<dbReference type="DNASU" id="9754"/>
<dbReference type="Ensembl" id="ENST00000252336.10">
    <molecule id="Q92502-1"/>
    <property type="protein sequence ID" value="ENSP00000252336.6"/>
    <property type="gene ID" value="ENSG00000130052.14"/>
</dbReference>
<dbReference type="Ensembl" id="ENST00000374597.3">
    <molecule id="Q92502-1"/>
    <property type="protein sequence ID" value="ENSP00000363725.3"/>
    <property type="gene ID" value="ENSG00000130052.14"/>
</dbReference>
<dbReference type="Ensembl" id="ENST00000374599.8">
    <molecule id="Q92502-2"/>
    <property type="protein sequence ID" value="ENSP00000363727.3"/>
    <property type="gene ID" value="ENSG00000130052.14"/>
</dbReference>
<dbReference type="GeneID" id="9754"/>
<dbReference type="KEGG" id="hsa:9754"/>
<dbReference type="MANE-Select" id="ENST00000374599.8">
    <molecule id="Q92502-2"/>
    <property type="protein sequence ID" value="ENSP00000363727.3"/>
    <property type="RefSeq nucleotide sequence ID" value="NM_001142503.3"/>
    <property type="RefSeq protein sequence ID" value="NP_001135975.1"/>
</dbReference>
<dbReference type="UCSC" id="uc004dxa.4">
    <molecule id="Q92502-1"/>
    <property type="organism name" value="human"/>
</dbReference>
<dbReference type="AGR" id="HGNC:19161"/>
<dbReference type="CTD" id="9754"/>
<dbReference type="DisGeNET" id="9754"/>
<dbReference type="GeneCards" id="STARD8"/>
<dbReference type="HGNC" id="HGNC:19161">
    <property type="gene designation" value="STARD8"/>
</dbReference>
<dbReference type="HPA" id="ENSG00000130052">
    <property type="expression patterns" value="Low tissue specificity"/>
</dbReference>
<dbReference type="MIM" id="300689">
    <property type="type" value="gene"/>
</dbReference>
<dbReference type="neXtProt" id="NX_Q92502"/>
<dbReference type="OpenTargets" id="ENSG00000130052"/>
<dbReference type="PharmGKB" id="PA38804"/>
<dbReference type="VEuPathDB" id="HostDB:ENSG00000130052"/>
<dbReference type="eggNOG" id="KOG2200">
    <property type="taxonomic scope" value="Eukaryota"/>
</dbReference>
<dbReference type="GeneTree" id="ENSGT00950000183061"/>
<dbReference type="HOGENOM" id="CLU_004367_0_1_1"/>
<dbReference type="InParanoid" id="Q92502"/>
<dbReference type="OMA" id="QKAWEAW"/>
<dbReference type="OrthoDB" id="10003330at2759"/>
<dbReference type="PAN-GO" id="Q92502">
    <property type="GO annotations" value="3 GO annotations based on evolutionary models"/>
</dbReference>
<dbReference type="PhylomeDB" id="Q92502"/>
<dbReference type="TreeFam" id="TF314044"/>
<dbReference type="PathwayCommons" id="Q92502"/>
<dbReference type="Reactome" id="R-HSA-8980692">
    <property type="pathway name" value="RHOA GTPase cycle"/>
</dbReference>
<dbReference type="Reactome" id="R-HSA-9013026">
    <property type="pathway name" value="RHOB GTPase cycle"/>
</dbReference>
<dbReference type="Reactome" id="R-HSA-9013148">
    <property type="pathway name" value="CDC42 GTPase cycle"/>
</dbReference>
<dbReference type="SignaLink" id="Q92502"/>
<dbReference type="SIGNOR" id="Q92502"/>
<dbReference type="BioGRID-ORCS" id="9754">
    <property type="hits" value="9 hits in 777 CRISPR screens"/>
</dbReference>
<dbReference type="ChiTaRS" id="STARD8">
    <property type="organism name" value="human"/>
</dbReference>
<dbReference type="GeneWiki" id="STARD8"/>
<dbReference type="GenomeRNAi" id="9754"/>
<dbReference type="Pharos" id="Q92502">
    <property type="development level" value="Tbio"/>
</dbReference>
<dbReference type="PRO" id="PR:Q92502"/>
<dbReference type="Proteomes" id="UP000005640">
    <property type="component" value="Chromosome X"/>
</dbReference>
<dbReference type="RNAct" id="Q92502">
    <property type="molecule type" value="protein"/>
</dbReference>
<dbReference type="Bgee" id="ENSG00000130052">
    <property type="expression patterns" value="Expressed in right lung and 154 other cell types or tissues"/>
</dbReference>
<dbReference type="ExpressionAtlas" id="Q92502">
    <property type="expression patterns" value="baseline and differential"/>
</dbReference>
<dbReference type="GO" id="GO:0005925">
    <property type="term" value="C:focal adhesion"/>
    <property type="evidence" value="ECO:0007669"/>
    <property type="project" value="UniProtKB-SubCell"/>
</dbReference>
<dbReference type="GO" id="GO:0005096">
    <property type="term" value="F:GTPase activator activity"/>
    <property type="evidence" value="ECO:0000318"/>
    <property type="project" value="GO_Central"/>
</dbReference>
<dbReference type="GO" id="GO:0008289">
    <property type="term" value="F:lipid binding"/>
    <property type="evidence" value="ECO:0007669"/>
    <property type="project" value="InterPro"/>
</dbReference>
<dbReference type="GO" id="GO:0030036">
    <property type="term" value="P:actin cytoskeleton organization"/>
    <property type="evidence" value="ECO:0000318"/>
    <property type="project" value="GO_Central"/>
</dbReference>
<dbReference type="GO" id="GO:0035023">
    <property type="term" value="P:regulation of Rho protein signal transduction"/>
    <property type="evidence" value="ECO:0000318"/>
    <property type="project" value="GO_Central"/>
</dbReference>
<dbReference type="GO" id="GO:0007165">
    <property type="term" value="P:signal transduction"/>
    <property type="evidence" value="ECO:0007669"/>
    <property type="project" value="InterPro"/>
</dbReference>
<dbReference type="CDD" id="cd08907">
    <property type="entry name" value="START_STARD8-like"/>
    <property type="match status" value="1"/>
</dbReference>
<dbReference type="FunFam" id="1.10.555.10:FF:000007">
    <property type="entry name" value="rho GTPase-activating protein 7 isoform X2"/>
    <property type="match status" value="1"/>
</dbReference>
<dbReference type="FunFam" id="3.30.530.20:FF:000009">
    <property type="entry name" value="StAR related lipid transfer domain containing 13"/>
    <property type="match status" value="1"/>
</dbReference>
<dbReference type="Gene3D" id="3.30.530.20">
    <property type="match status" value="1"/>
</dbReference>
<dbReference type="Gene3D" id="1.10.555.10">
    <property type="entry name" value="Rho GTPase activation protein"/>
    <property type="match status" value="1"/>
</dbReference>
<dbReference type="InterPro" id="IPR008936">
    <property type="entry name" value="Rho_GTPase_activation_prot"/>
</dbReference>
<dbReference type="InterPro" id="IPR000198">
    <property type="entry name" value="RhoGAP_dom"/>
</dbReference>
<dbReference type="InterPro" id="IPR023393">
    <property type="entry name" value="START-like_dom_sf"/>
</dbReference>
<dbReference type="InterPro" id="IPR002913">
    <property type="entry name" value="START_lipid-bd_dom"/>
</dbReference>
<dbReference type="PANTHER" id="PTHR12659">
    <property type="entry name" value="RHO-TYPE GTPASE ACTIVATING PROTEIN"/>
    <property type="match status" value="1"/>
</dbReference>
<dbReference type="PANTHER" id="PTHR12659:SF3">
    <property type="entry name" value="STAR-RELATED LIPID TRANSFER PROTEIN 8"/>
    <property type="match status" value="1"/>
</dbReference>
<dbReference type="Pfam" id="PF00620">
    <property type="entry name" value="RhoGAP"/>
    <property type="match status" value="1"/>
</dbReference>
<dbReference type="Pfam" id="PF01852">
    <property type="entry name" value="START"/>
    <property type="match status" value="1"/>
</dbReference>
<dbReference type="SMART" id="SM00324">
    <property type="entry name" value="RhoGAP"/>
    <property type="match status" value="1"/>
</dbReference>
<dbReference type="SMART" id="SM00234">
    <property type="entry name" value="START"/>
    <property type="match status" value="1"/>
</dbReference>
<dbReference type="SUPFAM" id="SSF55961">
    <property type="entry name" value="Bet v1-like"/>
    <property type="match status" value="1"/>
</dbReference>
<dbReference type="SUPFAM" id="SSF48350">
    <property type="entry name" value="GTPase activation domain, GAP"/>
    <property type="match status" value="1"/>
</dbReference>
<dbReference type="PROSITE" id="PS50238">
    <property type="entry name" value="RHOGAP"/>
    <property type="match status" value="1"/>
</dbReference>
<dbReference type="PROSITE" id="PS50848">
    <property type="entry name" value="START"/>
    <property type="match status" value="1"/>
</dbReference>
<accession>Q92502</accession>
<accession>A8K6T2</accession>
<accession>D3DVT9</accession>
<accession>Q5JST0</accession>
<accession>Q68DG7</accession>